<organism>
    <name type="scientific">Mus musculus</name>
    <name type="common">Mouse</name>
    <dbReference type="NCBI Taxonomy" id="10090"/>
    <lineage>
        <taxon>Eukaryota</taxon>
        <taxon>Metazoa</taxon>
        <taxon>Chordata</taxon>
        <taxon>Craniata</taxon>
        <taxon>Vertebrata</taxon>
        <taxon>Euteleostomi</taxon>
        <taxon>Mammalia</taxon>
        <taxon>Eutheria</taxon>
        <taxon>Euarchontoglires</taxon>
        <taxon>Glires</taxon>
        <taxon>Rodentia</taxon>
        <taxon>Myomorpha</taxon>
        <taxon>Muroidea</taxon>
        <taxon>Muridae</taxon>
        <taxon>Murinae</taxon>
        <taxon>Mus</taxon>
        <taxon>Mus</taxon>
    </lineage>
</organism>
<reference key="1">
    <citation type="journal article" date="1999" name="Nat. Genet.">
        <title>The neuronal ceroid lipofuscinoses in human EPMR and mnd mutant mice are associated with mutations in CLN8.</title>
        <authorList>
            <person name="Ranta S."/>
            <person name="Zhang Y."/>
            <person name="Ross B."/>
            <person name="Lonka L."/>
            <person name="Takkunen E."/>
            <person name="Messer A."/>
            <person name="Sharp J."/>
            <person name="Wheeler R."/>
            <person name="Kusumi K."/>
            <person name="Mole S."/>
            <person name="Liu W."/>
            <person name="Soares M.B."/>
            <person name="Bonaldo M.F."/>
            <person name="Hirvasniemi A."/>
            <person name="de la Chapelle A."/>
            <person name="Gilliam T.C."/>
            <person name="Lehesjoki A.-E."/>
        </authorList>
    </citation>
    <scope>NUCLEOTIDE SEQUENCE [MRNA]</scope>
    <scope>INVOLVEMENT IN MND</scope>
</reference>
<reference key="2">
    <citation type="journal article" date="2004" name="Genome Res.">
        <title>The status, quality, and expansion of the NIH full-length cDNA project: the Mammalian Gene Collection (MGC).</title>
        <authorList>
            <consortium name="The MGC Project Team"/>
        </authorList>
    </citation>
    <scope>NUCLEOTIDE SEQUENCE [LARGE SCALE MRNA]</scope>
    <source>
        <tissue>Salivary gland</tissue>
    </source>
</reference>
<reference key="3">
    <citation type="journal article" date="2009" name="BMC Cell Biol.">
        <title>Novel interactions of CLN5 support molecular networking between neuronal ceroid lipofuscinosis proteins.</title>
        <authorList>
            <person name="Lyly A."/>
            <person name="von Schantz C."/>
            <person name="Heine C."/>
            <person name="Schmiedt M.L."/>
            <person name="Sipilae T."/>
            <person name="Jalanko A."/>
            <person name="Kyttaelae A."/>
        </authorList>
    </citation>
    <scope>INTERACTION WITH CLN5</scope>
    <scope>SUBCELLULAR LOCATION</scope>
</reference>
<accession>Q9QUK3</accession>
<evidence type="ECO:0000250" key="1">
    <source>
        <dbReference type="UniProtKB" id="Q9UBY8"/>
    </source>
</evidence>
<evidence type="ECO:0000255" key="2"/>
<evidence type="ECO:0000255" key="3">
    <source>
        <dbReference type="PROSITE-ProRule" id="PRU00205"/>
    </source>
</evidence>
<evidence type="ECO:0000256" key="4">
    <source>
        <dbReference type="SAM" id="MobiDB-lite"/>
    </source>
</evidence>
<evidence type="ECO:0000269" key="5">
    <source>
    </source>
</evidence>
<evidence type="ECO:0000269" key="6">
    <source>
    </source>
</evidence>
<comment type="function">
    <text evidence="1">Could play a role in cell proliferation during neuronal differentiation and in protection against cell death.</text>
</comment>
<comment type="subunit">
    <text evidence="1 6">Interacts with CLN5 (PubMed:19941651). Interacts with CLN3 (By similarity).</text>
</comment>
<comment type="subcellular location">
    <subcellularLocation>
        <location evidence="1">Endoplasmic reticulum membrane</location>
        <topology evidence="2">Multi-pass membrane protein</topology>
    </subcellularLocation>
    <subcellularLocation>
        <location evidence="1">Endoplasmic reticulum-Golgi intermediate compartment membrane</location>
        <topology evidence="2">Multi-pass membrane protein</topology>
    </subcellularLocation>
    <subcellularLocation>
        <location evidence="6">Endoplasmic reticulum</location>
    </subcellularLocation>
</comment>
<comment type="disease">
    <text evidence="5">Defects in Cln8 are the cause of the phenotype motor neuron degeneration (mnd). Mnd is a naturally occurring mutant It is characterized by progressive motor system degeneration. It has intracellular autofluorescent inclusions similar to those seen in human Cln8.</text>
</comment>
<protein>
    <recommendedName>
        <fullName>Protein CLN8</fullName>
    </recommendedName>
</protein>
<feature type="chain" id="PRO_0000185538" description="Protein CLN8">
    <location>
        <begin position="1"/>
        <end position="288"/>
    </location>
</feature>
<feature type="transmembrane region" description="Helical" evidence="2">
    <location>
        <begin position="26"/>
        <end position="46"/>
    </location>
</feature>
<feature type="transmembrane region" description="Helical" evidence="2">
    <location>
        <begin position="71"/>
        <end position="91"/>
    </location>
</feature>
<feature type="transmembrane region" description="Helical" evidence="2">
    <location>
        <begin position="103"/>
        <end position="123"/>
    </location>
</feature>
<feature type="transmembrane region" description="Helical" evidence="2">
    <location>
        <begin position="131"/>
        <end position="151"/>
    </location>
</feature>
<feature type="transmembrane region" description="Helical" evidence="2">
    <location>
        <begin position="225"/>
        <end position="245"/>
    </location>
</feature>
<feature type="domain" description="TLC" evidence="3">
    <location>
        <begin position="62"/>
        <end position="262"/>
    </location>
</feature>
<feature type="region of interest" description="Disordered" evidence="4">
    <location>
        <begin position="269"/>
        <end position="288"/>
    </location>
</feature>
<feature type="short sequence motif" description="ER-retrieval signal">
    <location>
        <begin position="285"/>
        <end position="288"/>
    </location>
</feature>
<name>CLN8_MOUSE</name>
<dbReference type="EMBL" id="AF125308">
    <property type="protein sequence ID" value="AAF04462.1"/>
    <property type="molecule type" value="mRNA"/>
</dbReference>
<dbReference type="EMBL" id="AF125307">
    <property type="protein sequence ID" value="AAF04461.1"/>
    <property type="molecule type" value="mRNA"/>
</dbReference>
<dbReference type="EMBL" id="BC021625">
    <property type="protein sequence ID" value="AAH21625.1"/>
    <property type="molecule type" value="mRNA"/>
</dbReference>
<dbReference type="CCDS" id="CCDS40239.1"/>
<dbReference type="RefSeq" id="NP_001411953.1">
    <property type="nucleotide sequence ID" value="NM_001425024.1"/>
</dbReference>
<dbReference type="RefSeq" id="NP_001411954.1">
    <property type="nucleotide sequence ID" value="NM_001425025.1"/>
</dbReference>
<dbReference type="RefSeq" id="NP_036130.1">
    <property type="nucleotide sequence ID" value="NM_012000.4"/>
</dbReference>
<dbReference type="RefSeq" id="XP_006508869.1">
    <property type="nucleotide sequence ID" value="XM_006508806.3"/>
</dbReference>
<dbReference type="RefSeq" id="XP_006508870.1">
    <property type="nucleotide sequence ID" value="XM_006508807.2"/>
</dbReference>
<dbReference type="BioGRID" id="205042">
    <property type="interactions" value="1"/>
</dbReference>
<dbReference type="FunCoup" id="Q9QUK3">
    <property type="interactions" value="1012"/>
</dbReference>
<dbReference type="STRING" id="10090.ENSMUSP00000027554"/>
<dbReference type="GlyGen" id="Q9QUK3">
    <property type="glycosylation" value="1 site"/>
</dbReference>
<dbReference type="iPTMnet" id="Q9QUK3"/>
<dbReference type="PhosphoSitePlus" id="Q9QUK3"/>
<dbReference type="PaxDb" id="10090-ENSMUSP00000027554"/>
<dbReference type="ProteomicsDB" id="283528"/>
<dbReference type="Antibodypedia" id="21957">
    <property type="antibodies" value="139 antibodies from 24 providers"/>
</dbReference>
<dbReference type="DNASU" id="26889"/>
<dbReference type="Ensembl" id="ENSMUST00000027554.8">
    <property type="protein sequence ID" value="ENSMUSP00000027554.8"/>
    <property type="gene ID" value="ENSMUSG00000026317.8"/>
</dbReference>
<dbReference type="GeneID" id="26889"/>
<dbReference type="KEGG" id="mmu:26889"/>
<dbReference type="UCSC" id="uc009kze.1">
    <property type="organism name" value="mouse"/>
</dbReference>
<dbReference type="AGR" id="MGI:1349447"/>
<dbReference type="CTD" id="2055"/>
<dbReference type="MGI" id="MGI:1349447">
    <property type="gene designation" value="Cln8"/>
</dbReference>
<dbReference type="VEuPathDB" id="HostDB:ENSMUSG00000026317"/>
<dbReference type="eggNOG" id="KOG4561">
    <property type="taxonomic scope" value="Eukaryota"/>
</dbReference>
<dbReference type="GeneTree" id="ENSGT01010000222313"/>
<dbReference type="HOGENOM" id="CLU_951678_0_0_1"/>
<dbReference type="InParanoid" id="Q9QUK3"/>
<dbReference type="OMA" id="FFRTFDL"/>
<dbReference type="OrthoDB" id="10052906at2759"/>
<dbReference type="PhylomeDB" id="Q9QUK3"/>
<dbReference type="TreeFam" id="TF331146"/>
<dbReference type="BioGRID-ORCS" id="26889">
    <property type="hits" value="4 hits in 76 CRISPR screens"/>
</dbReference>
<dbReference type="ChiTaRS" id="Cln8">
    <property type="organism name" value="mouse"/>
</dbReference>
<dbReference type="PRO" id="PR:Q9QUK3"/>
<dbReference type="Proteomes" id="UP000000589">
    <property type="component" value="Chromosome 8"/>
</dbReference>
<dbReference type="RNAct" id="Q9QUK3">
    <property type="molecule type" value="protein"/>
</dbReference>
<dbReference type="Bgee" id="ENSMUSG00000026317">
    <property type="expression patterns" value="Expressed in lip and 245 other cell types or tissues"/>
</dbReference>
<dbReference type="ExpressionAtlas" id="Q9QUK3">
    <property type="expression patterns" value="baseline and differential"/>
</dbReference>
<dbReference type="GO" id="GO:0005783">
    <property type="term" value="C:endoplasmic reticulum"/>
    <property type="evidence" value="ECO:0000314"/>
    <property type="project" value="UniProtKB"/>
</dbReference>
<dbReference type="GO" id="GO:0005789">
    <property type="term" value="C:endoplasmic reticulum membrane"/>
    <property type="evidence" value="ECO:0007669"/>
    <property type="project" value="UniProtKB-SubCell"/>
</dbReference>
<dbReference type="GO" id="GO:0005793">
    <property type="term" value="C:endoplasmic reticulum-Golgi intermediate compartment"/>
    <property type="evidence" value="ECO:0000250"/>
    <property type="project" value="UniProtKB"/>
</dbReference>
<dbReference type="GO" id="GO:0033116">
    <property type="term" value="C:endoplasmic reticulum-Golgi intermediate compartment membrane"/>
    <property type="evidence" value="ECO:0007669"/>
    <property type="project" value="UniProtKB-SubCell"/>
</dbReference>
<dbReference type="GO" id="GO:0005739">
    <property type="term" value="C:mitochondrion"/>
    <property type="evidence" value="ECO:0007669"/>
    <property type="project" value="GOC"/>
</dbReference>
<dbReference type="GO" id="GO:0098793">
    <property type="term" value="C:presynapse"/>
    <property type="evidence" value="ECO:0007669"/>
    <property type="project" value="GOC"/>
</dbReference>
<dbReference type="GO" id="GO:0097001">
    <property type="term" value="F:ceramide binding"/>
    <property type="evidence" value="ECO:0000250"/>
    <property type="project" value="UniProtKB"/>
</dbReference>
<dbReference type="GO" id="GO:0008344">
    <property type="term" value="P:adult locomotory behavior"/>
    <property type="evidence" value="ECO:0000315"/>
    <property type="project" value="MGI"/>
</dbReference>
<dbReference type="GO" id="GO:0007628">
    <property type="term" value="P:adult walking behavior"/>
    <property type="evidence" value="ECO:0000315"/>
    <property type="project" value="MGI"/>
</dbReference>
<dbReference type="GO" id="GO:0006915">
    <property type="term" value="P:apoptotic process"/>
    <property type="evidence" value="ECO:0000315"/>
    <property type="project" value="MGI"/>
</dbReference>
<dbReference type="GO" id="GO:0008306">
    <property type="term" value="P:associative learning"/>
    <property type="evidence" value="ECO:0000315"/>
    <property type="project" value="MGI"/>
</dbReference>
<dbReference type="GO" id="GO:0006672">
    <property type="term" value="P:ceramide metabolic process"/>
    <property type="evidence" value="ECO:0000250"/>
    <property type="project" value="UniProtKB"/>
</dbReference>
<dbReference type="GO" id="GO:0008203">
    <property type="term" value="P:cholesterol metabolic process"/>
    <property type="evidence" value="ECO:0000250"/>
    <property type="project" value="UniProtKB"/>
</dbReference>
<dbReference type="GO" id="GO:0051935">
    <property type="term" value="P:glutamate reuptake"/>
    <property type="evidence" value="ECO:0000315"/>
    <property type="project" value="MGI"/>
</dbReference>
<dbReference type="GO" id="GO:0007040">
    <property type="term" value="P:lysosome organization"/>
    <property type="evidence" value="ECO:0000315"/>
    <property type="project" value="MGI"/>
</dbReference>
<dbReference type="GO" id="GO:0009057">
    <property type="term" value="P:macromolecule catabolic process"/>
    <property type="evidence" value="ECO:0000315"/>
    <property type="project" value="MGI"/>
</dbReference>
<dbReference type="GO" id="GO:0007006">
    <property type="term" value="P:mitochondrial membrane organization"/>
    <property type="evidence" value="ECO:0000315"/>
    <property type="project" value="MGI"/>
</dbReference>
<dbReference type="GO" id="GO:0050881">
    <property type="term" value="P:musculoskeletal movement"/>
    <property type="evidence" value="ECO:0000315"/>
    <property type="project" value="MGI"/>
</dbReference>
<dbReference type="GO" id="GO:0043524">
    <property type="term" value="P:negative regulation of neuron apoptotic process"/>
    <property type="evidence" value="ECO:0000315"/>
    <property type="project" value="MGI"/>
</dbReference>
<dbReference type="GO" id="GO:0007399">
    <property type="term" value="P:nervous system development"/>
    <property type="evidence" value="ECO:0000250"/>
    <property type="project" value="UniProtKB"/>
</dbReference>
<dbReference type="GO" id="GO:0060052">
    <property type="term" value="P:neurofilament cytoskeleton organization"/>
    <property type="evidence" value="ECO:0000315"/>
    <property type="project" value="MGI"/>
</dbReference>
<dbReference type="GO" id="GO:0050885">
    <property type="term" value="P:neuromuscular process controlling balance"/>
    <property type="evidence" value="ECO:0000315"/>
    <property type="project" value="MGI"/>
</dbReference>
<dbReference type="GO" id="GO:0050884">
    <property type="term" value="P:neuromuscular process controlling posture"/>
    <property type="evidence" value="ECO:0000315"/>
    <property type="project" value="MGI"/>
</dbReference>
<dbReference type="GO" id="GO:0051402">
    <property type="term" value="P:neuron apoptotic process"/>
    <property type="evidence" value="ECO:0000315"/>
    <property type="project" value="MGI"/>
</dbReference>
<dbReference type="GO" id="GO:0006644">
    <property type="term" value="P:phospholipid metabolic process"/>
    <property type="evidence" value="ECO:0000315"/>
    <property type="project" value="MGI"/>
</dbReference>
<dbReference type="GO" id="GO:0045494">
    <property type="term" value="P:photoreceptor cell maintenance"/>
    <property type="evidence" value="ECO:0000315"/>
    <property type="project" value="MGI"/>
</dbReference>
<dbReference type="GO" id="GO:0030163">
    <property type="term" value="P:protein catabolic process"/>
    <property type="evidence" value="ECO:0000315"/>
    <property type="project" value="MGI"/>
</dbReference>
<dbReference type="GO" id="GO:0008361">
    <property type="term" value="P:regulation of cell size"/>
    <property type="evidence" value="ECO:0000315"/>
    <property type="project" value="MGI"/>
</dbReference>
<dbReference type="GO" id="GO:0060041">
    <property type="term" value="P:retina development in camera-type eye"/>
    <property type="evidence" value="ECO:0000315"/>
    <property type="project" value="MGI"/>
</dbReference>
<dbReference type="GO" id="GO:0097473">
    <property type="term" value="P:retinal rod cell apoptotic process"/>
    <property type="evidence" value="ECO:0000315"/>
    <property type="project" value="MGI"/>
</dbReference>
<dbReference type="GO" id="GO:0035176">
    <property type="term" value="P:social behavior"/>
    <property type="evidence" value="ECO:0000315"/>
    <property type="project" value="MGI"/>
</dbReference>
<dbReference type="GO" id="GO:0021523">
    <property type="term" value="P:somatic motor neuron differentiation"/>
    <property type="evidence" value="ECO:0000315"/>
    <property type="project" value="MGI"/>
</dbReference>
<dbReference type="GO" id="GO:0021522">
    <property type="term" value="P:spinal cord motor neuron differentiation"/>
    <property type="evidence" value="ECO:0000315"/>
    <property type="project" value="MGI"/>
</dbReference>
<dbReference type="GO" id="GO:0007601">
    <property type="term" value="P:visual perception"/>
    <property type="evidence" value="ECO:0000315"/>
    <property type="project" value="MGI"/>
</dbReference>
<dbReference type="InterPro" id="IPR006634">
    <property type="entry name" value="TLC-dom"/>
</dbReference>
<dbReference type="InterPro" id="IPR050846">
    <property type="entry name" value="TLCD"/>
</dbReference>
<dbReference type="PANTHER" id="PTHR13439">
    <property type="entry name" value="CT120 PROTEIN"/>
    <property type="match status" value="1"/>
</dbReference>
<dbReference type="PANTHER" id="PTHR13439:SF7">
    <property type="entry name" value="PROTEIN CLN8"/>
    <property type="match status" value="1"/>
</dbReference>
<dbReference type="Pfam" id="PF03798">
    <property type="entry name" value="TRAM_LAG1_CLN8"/>
    <property type="match status" value="1"/>
</dbReference>
<dbReference type="SMART" id="SM00724">
    <property type="entry name" value="TLC"/>
    <property type="match status" value="1"/>
</dbReference>
<dbReference type="PROSITE" id="PS50922">
    <property type="entry name" value="TLC"/>
    <property type="match status" value="1"/>
</dbReference>
<gene>
    <name type="primary">Cln8</name>
</gene>
<sequence length="288" mass="33109">MTPVSSHGLAESIFDLDYASWKIRSTLAVAGFVFYLGVFVVCHQLSSSLNATYRSLAAKEKVFWNLAATRAVFGVQSTTAGLWALLGDPVLYADKALGQQNWCWFHITTATGFFFFENVAVHLSNLFFRTFDLFLVVHHLFAFLGFLGSAINLRAGHYLAMTTLLLEMSTPFTCISWMLLKAGWSDSLFWKANQWLMIHMFHCRMILTYHMWWVCFCHWDALTSSLHLPHWALFLFGLALLTAVINPYWTHKKTQQLLHPVDWNFAQEEAKGSRQERTNGQVPRKKRL</sequence>
<proteinExistence type="evidence at protein level"/>
<keyword id="KW-0256">Endoplasmic reticulum</keyword>
<keyword id="KW-0472">Membrane</keyword>
<keyword id="KW-0523">Neurodegeneration</keyword>
<keyword id="KW-0525">Neuronal ceroid lipofuscinosis</keyword>
<keyword id="KW-1185">Reference proteome</keyword>
<keyword id="KW-0812">Transmembrane</keyword>
<keyword id="KW-1133">Transmembrane helix</keyword>